<organism>
    <name type="scientific">Neisseria gonorrhoeae (strain ATCC 700825 / FA 1090)</name>
    <dbReference type="NCBI Taxonomy" id="242231"/>
    <lineage>
        <taxon>Bacteria</taxon>
        <taxon>Pseudomonadati</taxon>
        <taxon>Pseudomonadota</taxon>
        <taxon>Betaproteobacteria</taxon>
        <taxon>Neisseriales</taxon>
        <taxon>Neisseriaceae</taxon>
        <taxon>Neisseria</taxon>
    </lineage>
</organism>
<keyword id="KW-0328">Glycosyltransferase</keyword>
<keyword id="KW-0460">Magnesium</keyword>
<keyword id="KW-0665">Pyrimidine biosynthesis</keyword>
<keyword id="KW-1185">Reference proteome</keyword>
<keyword id="KW-0808">Transferase</keyword>
<sequence length="213" mass="23268">MTDFRQDFLKFSLAQNVLKFGEFTTKAGRRSPYFFNAGLFNDGASTLQLAKFYAQSIIESGIRFDMLFGPAYKGIILAAATAMMLAEKGVNVPFAYNRKEAKDRGEGGVLVGAPLKGRVLIIDDVISAGTSVRESIKLIEAEGATPAGVAIALDRMEKGTGKLSAVQEVEKQYGLPVAPIASLNDLFILLQNNPEFGQFLEPVRTYRRQYGVE</sequence>
<reference key="1">
    <citation type="submission" date="2003-03" db="EMBL/GenBank/DDBJ databases">
        <title>The complete genome sequence of Neisseria gonorrhoeae.</title>
        <authorList>
            <person name="Lewis L.A."/>
            <person name="Gillaspy A.F."/>
            <person name="McLaughlin R.E."/>
            <person name="Gipson M."/>
            <person name="Ducey T.F."/>
            <person name="Ownbey T."/>
            <person name="Hartman K."/>
            <person name="Nydick C."/>
            <person name="Carson M.B."/>
            <person name="Vaughn J."/>
            <person name="Thomson C."/>
            <person name="Song L."/>
            <person name="Lin S."/>
            <person name="Yuan X."/>
            <person name="Najar F."/>
            <person name="Zhan M."/>
            <person name="Ren Q."/>
            <person name="Zhu H."/>
            <person name="Qi S."/>
            <person name="Kenton S.M."/>
            <person name="Lai H."/>
            <person name="White J.D."/>
            <person name="Clifton S."/>
            <person name="Roe B.A."/>
            <person name="Dyer D.W."/>
        </authorList>
    </citation>
    <scope>NUCLEOTIDE SEQUENCE [LARGE SCALE GENOMIC DNA]</scope>
    <source>
        <strain>ATCC 700825 / FA 1090</strain>
    </source>
</reference>
<feature type="chain" id="PRO_1000066259" description="Orotate phosphoribosyltransferase">
    <location>
        <begin position="1"/>
        <end position="213"/>
    </location>
</feature>
<feature type="binding site" description="in other chain" evidence="1">
    <location>
        <position position="26"/>
    </location>
    <ligand>
        <name>5-phospho-alpha-D-ribose 1-diphosphate</name>
        <dbReference type="ChEBI" id="CHEBI:58017"/>
        <note>ligand shared between dimeric partners</note>
    </ligand>
</feature>
<feature type="binding site" evidence="1">
    <location>
        <begin position="34"/>
        <end position="35"/>
    </location>
    <ligand>
        <name>orotate</name>
        <dbReference type="ChEBI" id="CHEBI:30839"/>
    </ligand>
</feature>
<feature type="binding site" description="in other chain" evidence="1">
    <location>
        <begin position="72"/>
        <end position="73"/>
    </location>
    <ligand>
        <name>5-phospho-alpha-D-ribose 1-diphosphate</name>
        <dbReference type="ChEBI" id="CHEBI:58017"/>
        <note>ligand shared between dimeric partners</note>
    </ligand>
</feature>
<feature type="binding site" evidence="1">
    <location>
        <position position="98"/>
    </location>
    <ligand>
        <name>5-phospho-alpha-D-ribose 1-diphosphate</name>
        <dbReference type="ChEBI" id="CHEBI:58017"/>
        <note>ligand shared between dimeric partners</note>
    </ligand>
</feature>
<feature type="binding site" description="in other chain" evidence="1">
    <location>
        <position position="99"/>
    </location>
    <ligand>
        <name>5-phospho-alpha-D-ribose 1-diphosphate</name>
        <dbReference type="ChEBI" id="CHEBI:58017"/>
        <note>ligand shared between dimeric partners</note>
    </ligand>
</feature>
<feature type="binding site" evidence="1">
    <location>
        <position position="102"/>
    </location>
    <ligand>
        <name>5-phospho-alpha-D-ribose 1-diphosphate</name>
        <dbReference type="ChEBI" id="CHEBI:58017"/>
        <note>ligand shared between dimeric partners</note>
    </ligand>
</feature>
<feature type="binding site" description="in other chain" evidence="1">
    <location>
        <begin position="123"/>
        <end position="131"/>
    </location>
    <ligand>
        <name>5-phospho-alpha-D-ribose 1-diphosphate</name>
        <dbReference type="ChEBI" id="CHEBI:58017"/>
        <note>ligand shared between dimeric partners</note>
    </ligand>
</feature>
<feature type="binding site" evidence="1">
    <location>
        <position position="127"/>
    </location>
    <ligand>
        <name>orotate</name>
        <dbReference type="ChEBI" id="CHEBI:30839"/>
    </ligand>
</feature>
<feature type="binding site" evidence="1">
    <location>
        <position position="155"/>
    </location>
    <ligand>
        <name>orotate</name>
        <dbReference type="ChEBI" id="CHEBI:30839"/>
    </ligand>
</feature>
<name>PYRE_NEIG1</name>
<dbReference type="EC" id="2.4.2.10" evidence="1"/>
<dbReference type="EMBL" id="AE004969">
    <property type="protein sequence ID" value="AAW88798.1"/>
    <property type="molecule type" value="Genomic_DNA"/>
</dbReference>
<dbReference type="RefSeq" id="WP_003690501.1">
    <property type="nucleotide sequence ID" value="NC_002946.2"/>
</dbReference>
<dbReference type="RefSeq" id="YP_207210.1">
    <property type="nucleotide sequence ID" value="NC_002946.2"/>
</dbReference>
<dbReference type="SMR" id="Q5FAK5"/>
<dbReference type="STRING" id="242231.NGO_0029"/>
<dbReference type="GeneID" id="66752292"/>
<dbReference type="KEGG" id="ngo:NGO_0029"/>
<dbReference type="PATRIC" id="fig|242231.10.peg.29"/>
<dbReference type="HOGENOM" id="CLU_074878_0_1_4"/>
<dbReference type="UniPathway" id="UPA00070">
    <property type="reaction ID" value="UER00119"/>
</dbReference>
<dbReference type="Proteomes" id="UP000000535">
    <property type="component" value="Chromosome"/>
</dbReference>
<dbReference type="GO" id="GO:0005737">
    <property type="term" value="C:cytoplasm"/>
    <property type="evidence" value="ECO:0007669"/>
    <property type="project" value="TreeGrafter"/>
</dbReference>
<dbReference type="GO" id="GO:0000287">
    <property type="term" value="F:magnesium ion binding"/>
    <property type="evidence" value="ECO:0007669"/>
    <property type="project" value="UniProtKB-UniRule"/>
</dbReference>
<dbReference type="GO" id="GO:0004588">
    <property type="term" value="F:orotate phosphoribosyltransferase activity"/>
    <property type="evidence" value="ECO:0007669"/>
    <property type="project" value="UniProtKB-UniRule"/>
</dbReference>
<dbReference type="GO" id="GO:0006207">
    <property type="term" value="P:'de novo' pyrimidine nucleobase biosynthetic process"/>
    <property type="evidence" value="ECO:0007669"/>
    <property type="project" value="TreeGrafter"/>
</dbReference>
<dbReference type="GO" id="GO:0044205">
    <property type="term" value="P:'de novo' UMP biosynthetic process"/>
    <property type="evidence" value="ECO:0007669"/>
    <property type="project" value="UniProtKB-UniRule"/>
</dbReference>
<dbReference type="GO" id="GO:0046132">
    <property type="term" value="P:pyrimidine ribonucleoside biosynthetic process"/>
    <property type="evidence" value="ECO:0007669"/>
    <property type="project" value="TreeGrafter"/>
</dbReference>
<dbReference type="CDD" id="cd06223">
    <property type="entry name" value="PRTases_typeI"/>
    <property type="match status" value="1"/>
</dbReference>
<dbReference type="FunFam" id="3.40.50.2020:FF:000008">
    <property type="entry name" value="Orotate phosphoribosyltransferase"/>
    <property type="match status" value="1"/>
</dbReference>
<dbReference type="Gene3D" id="3.40.50.2020">
    <property type="match status" value="1"/>
</dbReference>
<dbReference type="HAMAP" id="MF_01208">
    <property type="entry name" value="PyrE"/>
    <property type="match status" value="1"/>
</dbReference>
<dbReference type="InterPro" id="IPR023031">
    <property type="entry name" value="OPRT"/>
</dbReference>
<dbReference type="InterPro" id="IPR004467">
    <property type="entry name" value="Or_phspho_trans_dom"/>
</dbReference>
<dbReference type="InterPro" id="IPR000836">
    <property type="entry name" value="PRibTrfase_dom"/>
</dbReference>
<dbReference type="InterPro" id="IPR029057">
    <property type="entry name" value="PRTase-like"/>
</dbReference>
<dbReference type="NCBIfam" id="TIGR00336">
    <property type="entry name" value="pyrE"/>
    <property type="match status" value="1"/>
</dbReference>
<dbReference type="PANTHER" id="PTHR46683">
    <property type="entry name" value="OROTATE PHOSPHORIBOSYLTRANSFERASE 1-RELATED"/>
    <property type="match status" value="1"/>
</dbReference>
<dbReference type="PANTHER" id="PTHR46683:SF1">
    <property type="entry name" value="OROTATE PHOSPHORIBOSYLTRANSFERASE 1-RELATED"/>
    <property type="match status" value="1"/>
</dbReference>
<dbReference type="Pfam" id="PF00156">
    <property type="entry name" value="Pribosyltran"/>
    <property type="match status" value="1"/>
</dbReference>
<dbReference type="SUPFAM" id="SSF53271">
    <property type="entry name" value="PRTase-like"/>
    <property type="match status" value="1"/>
</dbReference>
<dbReference type="PROSITE" id="PS00103">
    <property type="entry name" value="PUR_PYR_PR_TRANSFER"/>
    <property type="match status" value="1"/>
</dbReference>
<proteinExistence type="inferred from homology"/>
<accession>Q5FAK5</accession>
<evidence type="ECO:0000255" key="1">
    <source>
        <dbReference type="HAMAP-Rule" id="MF_01208"/>
    </source>
</evidence>
<comment type="function">
    <text evidence="1">Catalyzes the transfer of a ribosyl phosphate group from 5-phosphoribose 1-diphosphate to orotate, leading to the formation of orotidine monophosphate (OMP).</text>
</comment>
<comment type="catalytic activity">
    <reaction evidence="1">
        <text>orotidine 5'-phosphate + diphosphate = orotate + 5-phospho-alpha-D-ribose 1-diphosphate</text>
        <dbReference type="Rhea" id="RHEA:10380"/>
        <dbReference type="ChEBI" id="CHEBI:30839"/>
        <dbReference type="ChEBI" id="CHEBI:33019"/>
        <dbReference type="ChEBI" id="CHEBI:57538"/>
        <dbReference type="ChEBI" id="CHEBI:58017"/>
        <dbReference type="EC" id="2.4.2.10"/>
    </reaction>
</comment>
<comment type="cofactor">
    <cofactor evidence="1">
        <name>Mg(2+)</name>
        <dbReference type="ChEBI" id="CHEBI:18420"/>
    </cofactor>
</comment>
<comment type="pathway">
    <text evidence="1">Pyrimidine metabolism; UMP biosynthesis via de novo pathway; UMP from orotate: step 1/2.</text>
</comment>
<comment type="subunit">
    <text evidence="1">Homodimer.</text>
</comment>
<comment type="similarity">
    <text evidence="1">Belongs to the purine/pyrimidine phosphoribosyltransferase family. PyrE subfamily.</text>
</comment>
<gene>
    <name evidence="1" type="primary">pyrE</name>
    <name type="ordered locus">NGO_0029</name>
</gene>
<protein>
    <recommendedName>
        <fullName evidence="1">Orotate phosphoribosyltransferase</fullName>
        <shortName evidence="1">OPRT</shortName>
        <shortName evidence="1">OPRTase</shortName>
        <ecNumber evidence="1">2.4.2.10</ecNumber>
    </recommendedName>
</protein>